<sequence>MKYKDLRDFLAQLERQGELKRVAVEIDPHLEMTEICDRLLKAGGPAVLFEKSRGHDIPVLGNLFGTPKRVAMGMGQDSVEALREVGKLLAYLKEPDPPKGLKDAWEKLPVLKQVLNMAPKELSRASCQEIVWEGKDVDLGKLPIQTCWPGDAGPLITWGLTVTKGPHKTRQNLGIYRQQVIAPNKVIMRWLAHRGGALDFRDFTLANPGQPYPIAVALGADPATILGAVTPVPDSLSEYQFAGLLRGAKTEIVKCLTHDLQVPASAEIVLEGYIHPDETAVEGPFGDHTGYYNEQETFPVFTIERITMRRDPIYHSTYTGKPPDEPAILGVALNEVFVPLLQKQFTEIVDFYLPPEGCSYRMAVVSMKKQYAGHAKRIMFGVWSFLRQFMYTKFIIVTDDDVNIRDWKEVIWAITTRVDPARDTLIVENTPIDYLDFASPVSGLGGKMGLDATNKWPGETSREWGKPITMDEVVKARVDGMWTDLDL</sequence>
<proteinExistence type="inferred from homology"/>
<evidence type="ECO:0000255" key="1">
    <source>
        <dbReference type="HAMAP-Rule" id="MF_01636"/>
    </source>
</evidence>
<gene>
    <name evidence="1" type="primary">ubiD</name>
    <name type="ordered locus">Nmul_A2610</name>
</gene>
<reference key="1">
    <citation type="submission" date="2005-08" db="EMBL/GenBank/DDBJ databases">
        <title>Complete sequence of chromosome 1 of Nitrosospira multiformis ATCC 25196.</title>
        <authorList>
            <person name="Copeland A."/>
            <person name="Lucas S."/>
            <person name="Lapidus A."/>
            <person name="Barry K."/>
            <person name="Detter J.C."/>
            <person name="Glavina T."/>
            <person name="Hammon N."/>
            <person name="Israni S."/>
            <person name="Pitluck S."/>
            <person name="Chain P."/>
            <person name="Malfatti S."/>
            <person name="Shin M."/>
            <person name="Vergez L."/>
            <person name="Schmutz J."/>
            <person name="Larimer F."/>
            <person name="Land M."/>
            <person name="Hauser L."/>
            <person name="Kyrpides N."/>
            <person name="Lykidis A."/>
            <person name="Richardson P."/>
        </authorList>
    </citation>
    <scope>NUCLEOTIDE SEQUENCE [LARGE SCALE GENOMIC DNA]</scope>
    <source>
        <strain>ATCC 25196 / NCIMB 11849 / C 71</strain>
    </source>
</reference>
<feature type="chain" id="PRO_0000267676" description="3-octaprenyl-4-hydroxybenzoate carboxy-lyase">
    <location>
        <begin position="1"/>
        <end position="487"/>
    </location>
</feature>
<feature type="active site" description="Proton donor" evidence="1">
    <location>
        <position position="287"/>
    </location>
</feature>
<feature type="binding site" evidence="1">
    <location>
        <position position="172"/>
    </location>
    <ligand>
        <name>Mn(2+)</name>
        <dbReference type="ChEBI" id="CHEBI:29035"/>
    </ligand>
</feature>
<feature type="binding site" evidence="1">
    <location>
        <begin position="175"/>
        <end position="177"/>
    </location>
    <ligand>
        <name>prenylated FMN</name>
        <dbReference type="ChEBI" id="CHEBI:87746"/>
    </ligand>
</feature>
<feature type="binding site" evidence="1">
    <location>
        <begin position="189"/>
        <end position="191"/>
    </location>
    <ligand>
        <name>prenylated FMN</name>
        <dbReference type="ChEBI" id="CHEBI:87746"/>
    </ligand>
</feature>
<feature type="binding site" evidence="1">
    <location>
        <begin position="194"/>
        <end position="195"/>
    </location>
    <ligand>
        <name>prenylated FMN</name>
        <dbReference type="ChEBI" id="CHEBI:87746"/>
    </ligand>
</feature>
<feature type="binding site" evidence="1">
    <location>
        <position position="238"/>
    </location>
    <ligand>
        <name>Mn(2+)</name>
        <dbReference type="ChEBI" id="CHEBI:29035"/>
    </ligand>
</feature>
<dbReference type="EC" id="4.1.1.98" evidence="1"/>
<dbReference type="EMBL" id="CP000103">
    <property type="protein sequence ID" value="ABB75897.1"/>
    <property type="molecule type" value="Genomic_DNA"/>
</dbReference>
<dbReference type="RefSeq" id="WP_011381894.1">
    <property type="nucleotide sequence ID" value="NC_007614.1"/>
</dbReference>
<dbReference type="SMR" id="Q2Y5S4"/>
<dbReference type="STRING" id="323848.Nmul_A2610"/>
<dbReference type="KEGG" id="nmu:Nmul_A2610"/>
<dbReference type="eggNOG" id="COG0043">
    <property type="taxonomic scope" value="Bacteria"/>
</dbReference>
<dbReference type="HOGENOM" id="CLU_023348_4_1_4"/>
<dbReference type="OrthoDB" id="9809841at2"/>
<dbReference type="UniPathway" id="UPA00232"/>
<dbReference type="Proteomes" id="UP000002718">
    <property type="component" value="Chromosome"/>
</dbReference>
<dbReference type="GO" id="GO:0005829">
    <property type="term" value="C:cytosol"/>
    <property type="evidence" value="ECO:0007669"/>
    <property type="project" value="TreeGrafter"/>
</dbReference>
<dbReference type="GO" id="GO:0005886">
    <property type="term" value="C:plasma membrane"/>
    <property type="evidence" value="ECO:0007669"/>
    <property type="project" value="UniProtKB-SubCell"/>
</dbReference>
<dbReference type="GO" id="GO:0008694">
    <property type="term" value="F:3-octaprenyl-4-hydroxybenzoate carboxy-lyase activity"/>
    <property type="evidence" value="ECO:0007669"/>
    <property type="project" value="UniProtKB-UniRule"/>
</dbReference>
<dbReference type="GO" id="GO:0046872">
    <property type="term" value="F:metal ion binding"/>
    <property type="evidence" value="ECO:0007669"/>
    <property type="project" value="UniProtKB-KW"/>
</dbReference>
<dbReference type="GO" id="GO:0006744">
    <property type="term" value="P:ubiquinone biosynthetic process"/>
    <property type="evidence" value="ECO:0007669"/>
    <property type="project" value="UniProtKB-UniRule"/>
</dbReference>
<dbReference type="FunFam" id="3.40.1670.10:FF:000001">
    <property type="entry name" value="3-octaprenyl-4-hydroxybenzoate carboxy-lyase"/>
    <property type="match status" value="1"/>
</dbReference>
<dbReference type="Gene3D" id="1.20.5.570">
    <property type="entry name" value="Single helix bin"/>
    <property type="match status" value="1"/>
</dbReference>
<dbReference type="Gene3D" id="3.40.1670.10">
    <property type="entry name" value="UbiD C-terminal domain-like"/>
    <property type="match status" value="1"/>
</dbReference>
<dbReference type="HAMAP" id="MF_01636">
    <property type="entry name" value="UbiD"/>
    <property type="match status" value="1"/>
</dbReference>
<dbReference type="InterPro" id="IPR002830">
    <property type="entry name" value="UbiD"/>
</dbReference>
<dbReference type="InterPro" id="IPR049381">
    <property type="entry name" value="UbiD-like_C"/>
</dbReference>
<dbReference type="InterPro" id="IPR049383">
    <property type="entry name" value="UbiD-like_N"/>
</dbReference>
<dbReference type="InterPro" id="IPR023677">
    <property type="entry name" value="UbiD_bacteria"/>
</dbReference>
<dbReference type="InterPro" id="IPR048304">
    <property type="entry name" value="UbiD_Rift_dom"/>
</dbReference>
<dbReference type="NCBIfam" id="NF008175">
    <property type="entry name" value="PRK10922.1"/>
    <property type="match status" value="1"/>
</dbReference>
<dbReference type="NCBIfam" id="TIGR00148">
    <property type="entry name" value="UbiD family decarboxylase"/>
    <property type="match status" value="1"/>
</dbReference>
<dbReference type="PANTHER" id="PTHR30108">
    <property type="entry name" value="3-OCTAPRENYL-4-HYDROXYBENZOATE CARBOXY-LYASE-RELATED"/>
    <property type="match status" value="1"/>
</dbReference>
<dbReference type="PANTHER" id="PTHR30108:SF17">
    <property type="entry name" value="FERULIC ACID DECARBOXYLASE 1"/>
    <property type="match status" value="1"/>
</dbReference>
<dbReference type="Pfam" id="PF01977">
    <property type="entry name" value="UbiD"/>
    <property type="match status" value="1"/>
</dbReference>
<dbReference type="Pfam" id="PF20696">
    <property type="entry name" value="UbiD_C"/>
    <property type="match status" value="1"/>
</dbReference>
<dbReference type="Pfam" id="PF20695">
    <property type="entry name" value="UbiD_N"/>
    <property type="match status" value="1"/>
</dbReference>
<dbReference type="SUPFAM" id="SSF50475">
    <property type="entry name" value="FMN-binding split barrel"/>
    <property type="match status" value="1"/>
</dbReference>
<dbReference type="SUPFAM" id="SSF143968">
    <property type="entry name" value="UbiD C-terminal domain-like"/>
    <property type="match status" value="1"/>
</dbReference>
<accession>Q2Y5S4</accession>
<name>UBID_NITMU</name>
<keyword id="KW-1003">Cell membrane</keyword>
<keyword id="KW-0210">Decarboxylase</keyword>
<keyword id="KW-0285">Flavoprotein</keyword>
<keyword id="KW-0288">FMN</keyword>
<keyword id="KW-0456">Lyase</keyword>
<keyword id="KW-0464">Manganese</keyword>
<keyword id="KW-0472">Membrane</keyword>
<keyword id="KW-0479">Metal-binding</keyword>
<keyword id="KW-1185">Reference proteome</keyword>
<keyword id="KW-0831">Ubiquinone biosynthesis</keyword>
<comment type="function">
    <text evidence="1">Catalyzes the decarboxylation of 3-octaprenyl-4-hydroxy benzoate to 2-octaprenylphenol, an intermediate step in ubiquinone biosynthesis.</text>
</comment>
<comment type="catalytic activity">
    <reaction evidence="1">
        <text>a 4-hydroxy-3-(all-trans-polyprenyl)benzoate + H(+) = a 2-(all-trans-polyprenyl)phenol + CO2</text>
        <dbReference type="Rhea" id="RHEA:41680"/>
        <dbReference type="Rhea" id="RHEA-COMP:9514"/>
        <dbReference type="Rhea" id="RHEA-COMP:9516"/>
        <dbReference type="ChEBI" id="CHEBI:1269"/>
        <dbReference type="ChEBI" id="CHEBI:15378"/>
        <dbReference type="ChEBI" id="CHEBI:16526"/>
        <dbReference type="ChEBI" id="CHEBI:78396"/>
        <dbReference type="EC" id="4.1.1.98"/>
    </reaction>
</comment>
<comment type="cofactor">
    <cofactor evidence="1">
        <name>prenylated FMN</name>
        <dbReference type="ChEBI" id="CHEBI:87746"/>
    </cofactor>
    <text evidence="1">Binds 1 prenylated FMN per subunit.</text>
</comment>
<comment type="cofactor">
    <cofactor evidence="1">
        <name>Mn(2+)</name>
        <dbReference type="ChEBI" id="CHEBI:29035"/>
    </cofactor>
</comment>
<comment type="pathway">
    <text evidence="1">Cofactor biosynthesis; ubiquinone biosynthesis.</text>
</comment>
<comment type="subunit">
    <text evidence="1">Homohexamer.</text>
</comment>
<comment type="subcellular location">
    <subcellularLocation>
        <location evidence="1">Cell membrane</location>
        <topology evidence="1">Peripheral membrane protein</topology>
    </subcellularLocation>
</comment>
<comment type="similarity">
    <text evidence="1">Belongs to the UbiD family.</text>
</comment>
<organism>
    <name type="scientific">Nitrosospira multiformis (strain ATCC 25196 / NCIMB 11849 / C 71)</name>
    <dbReference type="NCBI Taxonomy" id="323848"/>
    <lineage>
        <taxon>Bacteria</taxon>
        <taxon>Pseudomonadati</taxon>
        <taxon>Pseudomonadota</taxon>
        <taxon>Betaproteobacteria</taxon>
        <taxon>Nitrosomonadales</taxon>
        <taxon>Nitrosomonadaceae</taxon>
        <taxon>Nitrosospira</taxon>
    </lineage>
</organism>
<protein>
    <recommendedName>
        <fullName evidence="1">3-octaprenyl-4-hydroxybenzoate carboxy-lyase</fullName>
        <ecNumber evidence="1">4.1.1.98</ecNumber>
    </recommendedName>
    <alternativeName>
        <fullName evidence="1">Polyprenyl p-hydroxybenzoate decarboxylase</fullName>
    </alternativeName>
</protein>